<organism>
    <name type="scientific">Rhodomonas salina</name>
    <name type="common">Cryptomonas salina</name>
    <dbReference type="NCBI Taxonomy" id="52970"/>
    <lineage>
        <taxon>Eukaryota</taxon>
        <taxon>Cryptophyceae</taxon>
        <taxon>Pyrenomonadales</taxon>
        <taxon>Pyrenomonadaceae</taxon>
        <taxon>Rhodomonas</taxon>
    </lineage>
</organism>
<comment type="subunit">
    <text evidence="1">Part of the 30S ribosomal subunit.</text>
</comment>
<comment type="subcellular location">
    <subcellularLocation>
        <location>Plastid</location>
        <location>Chloroplast</location>
    </subcellularLocation>
</comment>
<comment type="similarity">
    <text evidence="2">Belongs to the universal ribosomal protein uS3 family.</text>
</comment>
<gene>
    <name type="primary">rps3</name>
</gene>
<reference key="1">
    <citation type="journal article" date="2007" name="Mol. Biol. Evol.">
        <title>Plastid genome sequence of the cryptophyte alga Rhodomonas salina CCMP1319: lateral transfer of putative DNA replication machinery and a test of chromist plastid phylogeny.</title>
        <authorList>
            <person name="Khan H."/>
            <person name="Parks N."/>
            <person name="Kozera C."/>
            <person name="Curtis B.A."/>
            <person name="Parsons B.J."/>
            <person name="Bowman S."/>
            <person name="Archibald J.M."/>
        </authorList>
    </citation>
    <scope>NUCLEOTIDE SEQUENCE [LARGE SCALE GENOMIC DNA]</scope>
    <source>
        <strain>CCMP1319 / NEPCC76 / CS-174</strain>
    </source>
</reference>
<keyword id="KW-0150">Chloroplast</keyword>
<keyword id="KW-0934">Plastid</keyword>
<keyword id="KW-0687">Ribonucleoprotein</keyword>
<keyword id="KW-0689">Ribosomal protein</keyword>
<keyword id="KW-0694">RNA-binding</keyword>
<keyword id="KW-0699">rRNA-binding</keyword>
<sequence length="218" mass="24561">MGQKVHPLGFRLRITQTHRSSWFASSKNYPETLAEDYAIRNYVKVNLSSAGISKVEIHRKSDQVELEIHTSRPGIIVGRSGSGIDTIKEDLRKIINKNNQIRINVTELKNVDADANLIAEFIAQQLEKRIAFRRATRQAIQRAQRANVQGIKVQVSGRLNGAEIARSEWVREGRVPLQTLRADIDYATKEADTTYGKLGVKVWVFNGEKTPSIAKVEV</sequence>
<feature type="chain" id="PRO_0000323330" description="Small ribosomal subunit protein uS3c">
    <location>
        <begin position="1"/>
        <end position="218"/>
    </location>
</feature>
<feature type="domain" description="KH type-2">
    <location>
        <begin position="39"/>
        <end position="109"/>
    </location>
</feature>
<proteinExistence type="inferred from homology"/>
<geneLocation type="chloroplast"/>
<dbReference type="EMBL" id="EF508371">
    <property type="protein sequence ID" value="ABO70770.1"/>
    <property type="molecule type" value="Genomic_DNA"/>
</dbReference>
<dbReference type="RefSeq" id="YP_001293586.1">
    <property type="nucleotide sequence ID" value="NC_009573.1"/>
</dbReference>
<dbReference type="SMR" id="A6MW07"/>
<dbReference type="GeneID" id="5228519"/>
<dbReference type="GO" id="GO:0009507">
    <property type="term" value="C:chloroplast"/>
    <property type="evidence" value="ECO:0007669"/>
    <property type="project" value="UniProtKB-SubCell"/>
</dbReference>
<dbReference type="GO" id="GO:0022627">
    <property type="term" value="C:cytosolic small ribosomal subunit"/>
    <property type="evidence" value="ECO:0007669"/>
    <property type="project" value="TreeGrafter"/>
</dbReference>
<dbReference type="GO" id="GO:0019843">
    <property type="term" value="F:rRNA binding"/>
    <property type="evidence" value="ECO:0007669"/>
    <property type="project" value="UniProtKB-UniRule"/>
</dbReference>
<dbReference type="GO" id="GO:0003735">
    <property type="term" value="F:structural constituent of ribosome"/>
    <property type="evidence" value="ECO:0007669"/>
    <property type="project" value="InterPro"/>
</dbReference>
<dbReference type="GO" id="GO:0006412">
    <property type="term" value="P:translation"/>
    <property type="evidence" value="ECO:0007669"/>
    <property type="project" value="UniProtKB-UniRule"/>
</dbReference>
<dbReference type="CDD" id="cd02412">
    <property type="entry name" value="KH-II_30S_S3"/>
    <property type="match status" value="1"/>
</dbReference>
<dbReference type="FunFam" id="3.30.300.20:FF:000001">
    <property type="entry name" value="30S ribosomal protein S3"/>
    <property type="match status" value="1"/>
</dbReference>
<dbReference type="Gene3D" id="3.30.300.20">
    <property type="match status" value="1"/>
</dbReference>
<dbReference type="Gene3D" id="3.30.1140.32">
    <property type="entry name" value="Ribosomal protein S3, C-terminal domain"/>
    <property type="match status" value="1"/>
</dbReference>
<dbReference type="HAMAP" id="MF_01309_B">
    <property type="entry name" value="Ribosomal_uS3_B"/>
    <property type="match status" value="1"/>
</dbReference>
<dbReference type="InterPro" id="IPR004087">
    <property type="entry name" value="KH_dom"/>
</dbReference>
<dbReference type="InterPro" id="IPR015946">
    <property type="entry name" value="KH_dom-like_a/b"/>
</dbReference>
<dbReference type="InterPro" id="IPR004044">
    <property type="entry name" value="KH_dom_type_2"/>
</dbReference>
<dbReference type="InterPro" id="IPR009019">
    <property type="entry name" value="KH_sf_prok-type"/>
</dbReference>
<dbReference type="InterPro" id="IPR036419">
    <property type="entry name" value="Ribosomal_S3_C_sf"/>
</dbReference>
<dbReference type="InterPro" id="IPR005704">
    <property type="entry name" value="Ribosomal_uS3_bac-typ"/>
</dbReference>
<dbReference type="InterPro" id="IPR001351">
    <property type="entry name" value="Ribosomal_uS3_C"/>
</dbReference>
<dbReference type="InterPro" id="IPR018280">
    <property type="entry name" value="Ribosomal_uS3_CS"/>
</dbReference>
<dbReference type="NCBIfam" id="TIGR01009">
    <property type="entry name" value="rpsC_bact"/>
    <property type="match status" value="1"/>
</dbReference>
<dbReference type="PANTHER" id="PTHR11760">
    <property type="entry name" value="30S/40S RIBOSOMAL PROTEIN S3"/>
    <property type="match status" value="1"/>
</dbReference>
<dbReference type="PANTHER" id="PTHR11760:SF19">
    <property type="entry name" value="SMALL RIBOSOMAL SUBUNIT PROTEIN US3C"/>
    <property type="match status" value="1"/>
</dbReference>
<dbReference type="Pfam" id="PF07650">
    <property type="entry name" value="KH_2"/>
    <property type="match status" value="1"/>
</dbReference>
<dbReference type="Pfam" id="PF00189">
    <property type="entry name" value="Ribosomal_S3_C"/>
    <property type="match status" value="1"/>
</dbReference>
<dbReference type="SMART" id="SM00322">
    <property type="entry name" value="KH"/>
    <property type="match status" value="1"/>
</dbReference>
<dbReference type="SUPFAM" id="SSF54814">
    <property type="entry name" value="Prokaryotic type KH domain (KH-domain type II)"/>
    <property type="match status" value="1"/>
</dbReference>
<dbReference type="SUPFAM" id="SSF54821">
    <property type="entry name" value="Ribosomal protein S3 C-terminal domain"/>
    <property type="match status" value="1"/>
</dbReference>
<dbReference type="PROSITE" id="PS50823">
    <property type="entry name" value="KH_TYPE_2"/>
    <property type="match status" value="1"/>
</dbReference>
<dbReference type="PROSITE" id="PS00548">
    <property type="entry name" value="RIBOSOMAL_S3"/>
    <property type="match status" value="1"/>
</dbReference>
<accession>A6MW07</accession>
<name>RR3_RHDSA</name>
<protein>
    <recommendedName>
        <fullName evidence="2">Small ribosomal subunit protein uS3c</fullName>
    </recommendedName>
    <alternativeName>
        <fullName>30S ribosomal protein S3, chloroplastic</fullName>
    </alternativeName>
</protein>
<evidence type="ECO:0000250" key="1"/>
<evidence type="ECO:0000305" key="2"/>